<gene>
    <name type="primary">nadD</name>
    <name type="ordered locus">NMB2024</name>
</gene>
<proteinExistence type="inferred from homology"/>
<accession>P57090</accession>
<comment type="function">
    <text evidence="1">Catalyzes the reversible adenylation of nicotinate mononucleotide (NaMN) to nicotinic acid adenine dinucleotide (NaAD).</text>
</comment>
<comment type="catalytic activity">
    <reaction>
        <text>nicotinate beta-D-ribonucleotide + ATP + H(+) = deamido-NAD(+) + diphosphate</text>
        <dbReference type="Rhea" id="RHEA:22860"/>
        <dbReference type="ChEBI" id="CHEBI:15378"/>
        <dbReference type="ChEBI" id="CHEBI:30616"/>
        <dbReference type="ChEBI" id="CHEBI:33019"/>
        <dbReference type="ChEBI" id="CHEBI:57502"/>
        <dbReference type="ChEBI" id="CHEBI:58437"/>
        <dbReference type="EC" id="2.7.7.18"/>
    </reaction>
</comment>
<comment type="pathway">
    <text>Cofactor biosynthesis; NAD(+) biosynthesis; deamido-NAD(+) from nicotinate D-ribonucleotide: step 1/1.</text>
</comment>
<comment type="similarity">
    <text evidence="2">Belongs to the NadD family.</text>
</comment>
<organism>
    <name type="scientific">Neisseria meningitidis serogroup B (strain ATCC BAA-335 / MC58)</name>
    <dbReference type="NCBI Taxonomy" id="122586"/>
    <lineage>
        <taxon>Bacteria</taxon>
        <taxon>Pseudomonadati</taxon>
        <taxon>Pseudomonadota</taxon>
        <taxon>Betaproteobacteria</taxon>
        <taxon>Neisseriales</taxon>
        <taxon>Neisseriaceae</taxon>
        <taxon>Neisseria</taxon>
    </lineage>
</organism>
<evidence type="ECO:0000250" key="1"/>
<evidence type="ECO:0000305" key="2"/>
<sequence length="201" mass="22269">MKKIGLFGGTFDPIHNGHLHIARAFADEIGLDAVVFLPTGGPYHKDAASASAADRLAMVELATAEDARFAVSDCDIVREGATYTFDTVQIFRQQFPSAQLWWLMGSDSLMKLHTWKKWQMLVRETNIAVAMRQGDSLHQTPRELHAWLGKSLQDGSVRILSAPMHNVSSTEIRRNLAGQGVSDGIPPAAARYIREHGLYEK</sequence>
<keyword id="KW-0067">ATP-binding</keyword>
<keyword id="KW-0520">NAD</keyword>
<keyword id="KW-0547">Nucleotide-binding</keyword>
<keyword id="KW-0548">Nucleotidyltransferase</keyword>
<keyword id="KW-0662">Pyridine nucleotide biosynthesis</keyword>
<keyword id="KW-1185">Reference proteome</keyword>
<keyword id="KW-0808">Transferase</keyword>
<feature type="chain" id="PRO_0000181430" description="Probable nicotinate-nucleotide adenylyltransferase">
    <location>
        <begin position="1"/>
        <end position="201"/>
    </location>
</feature>
<dbReference type="EC" id="2.7.7.18"/>
<dbReference type="EMBL" id="AE002098">
    <property type="protein sequence ID" value="AAF42347.1"/>
    <property type="molecule type" value="Genomic_DNA"/>
</dbReference>
<dbReference type="PIR" id="C81015">
    <property type="entry name" value="C81015"/>
</dbReference>
<dbReference type="RefSeq" id="NP_275016.1">
    <property type="nucleotide sequence ID" value="NC_003112.2"/>
</dbReference>
<dbReference type="RefSeq" id="WP_002223158.1">
    <property type="nucleotide sequence ID" value="NC_003112.2"/>
</dbReference>
<dbReference type="SMR" id="P57090"/>
<dbReference type="FunCoup" id="P57090">
    <property type="interactions" value="305"/>
</dbReference>
<dbReference type="STRING" id="122586.NMB2024"/>
<dbReference type="PaxDb" id="122586-NMB2024"/>
<dbReference type="KEGG" id="nme:NMB2024"/>
<dbReference type="PATRIC" id="fig|122586.8.peg.2581"/>
<dbReference type="HOGENOM" id="CLU_069765_0_0_4"/>
<dbReference type="InParanoid" id="P57090"/>
<dbReference type="OrthoDB" id="5295945at2"/>
<dbReference type="UniPathway" id="UPA00253">
    <property type="reaction ID" value="UER00332"/>
</dbReference>
<dbReference type="Proteomes" id="UP000000425">
    <property type="component" value="Chromosome"/>
</dbReference>
<dbReference type="GO" id="GO:0005524">
    <property type="term" value="F:ATP binding"/>
    <property type="evidence" value="ECO:0007669"/>
    <property type="project" value="UniProtKB-KW"/>
</dbReference>
<dbReference type="GO" id="GO:0004515">
    <property type="term" value="F:nicotinate-nucleotide adenylyltransferase activity"/>
    <property type="evidence" value="ECO:0007669"/>
    <property type="project" value="UniProtKB-UniRule"/>
</dbReference>
<dbReference type="GO" id="GO:0009435">
    <property type="term" value="P:NAD biosynthetic process"/>
    <property type="evidence" value="ECO:0007669"/>
    <property type="project" value="UniProtKB-UniRule"/>
</dbReference>
<dbReference type="CDD" id="cd02165">
    <property type="entry name" value="NMNAT"/>
    <property type="match status" value="1"/>
</dbReference>
<dbReference type="FunFam" id="3.40.50.620:FF:000254">
    <property type="entry name" value="Probable nicotinate-nucleotide adenylyltransferase"/>
    <property type="match status" value="1"/>
</dbReference>
<dbReference type="Gene3D" id="3.40.50.620">
    <property type="entry name" value="HUPs"/>
    <property type="match status" value="1"/>
</dbReference>
<dbReference type="HAMAP" id="MF_00244">
    <property type="entry name" value="NaMN_adenylyltr"/>
    <property type="match status" value="1"/>
</dbReference>
<dbReference type="InterPro" id="IPR004821">
    <property type="entry name" value="Cyt_trans-like"/>
</dbReference>
<dbReference type="InterPro" id="IPR005248">
    <property type="entry name" value="NadD/NMNAT"/>
</dbReference>
<dbReference type="InterPro" id="IPR014729">
    <property type="entry name" value="Rossmann-like_a/b/a_fold"/>
</dbReference>
<dbReference type="NCBIfam" id="TIGR00125">
    <property type="entry name" value="cyt_tran_rel"/>
    <property type="match status" value="1"/>
</dbReference>
<dbReference type="NCBIfam" id="TIGR00482">
    <property type="entry name" value="nicotinate (nicotinamide) nucleotide adenylyltransferase"/>
    <property type="match status" value="1"/>
</dbReference>
<dbReference type="NCBIfam" id="NF000840">
    <property type="entry name" value="PRK00071.1-3"/>
    <property type="match status" value="1"/>
</dbReference>
<dbReference type="PANTHER" id="PTHR39321">
    <property type="entry name" value="NICOTINATE-NUCLEOTIDE ADENYLYLTRANSFERASE-RELATED"/>
    <property type="match status" value="1"/>
</dbReference>
<dbReference type="PANTHER" id="PTHR39321:SF3">
    <property type="entry name" value="PHOSPHOPANTETHEINE ADENYLYLTRANSFERASE"/>
    <property type="match status" value="1"/>
</dbReference>
<dbReference type="Pfam" id="PF01467">
    <property type="entry name" value="CTP_transf_like"/>
    <property type="match status" value="1"/>
</dbReference>
<dbReference type="SUPFAM" id="SSF52374">
    <property type="entry name" value="Nucleotidylyl transferase"/>
    <property type="match status" value="1"/>
</dbReference>
<protein>
    <recommendedName>
        <fullName>Probable nicotinate-nucleotide adenylyltransferase</fullName>
        <ecNumber>2.7.7.18</ecNumber>
    </recommendedName>
    <alternativeName>
        <fullName>Deamido-NAD(+) diphosphorylase</fullName>
    </alternativeName>
    <alternativeName>
        <fullName>Deamido-NAD(+) pyrophosphorylase</fullName>
    </alternativeName>
    <alternativeName>
        <fullName>Nicotinate mononucleotide adenylyltransferase</fullName>
        <shortName>NaMN adenylyltransferase</shortName>
    </alternativeName>
</protein>
<name>NADD_NEIMB</name>
<reference key="1">
    <citation type="journal article" date="2000" name="Science">
        <title>Complete genome sequence of Neisseria meningitidis serogroup B strain MC58.</title>
        <authorList>
            <person name="Tettelin H."/>
            <person name="Saunders N.J."/>
            <person name="Heidelberg J.F."/>
            <person name="Jeffries A.C."/>
            <person name="Nelson K.E."/>
            <person name="Eisen J.A."/>
            <person name="Ketchum K.A."/>
            <person name="Hood D.W."/>
            <person name="Peden J.F."/>
            <person name="Dodson R.J."/>
            <person name="Nelson W.C."/>
            <person name="Gwinn M.L."/>
            <person name="DeBoy R.T."/>
            <person name="Peterson J.D."/>
            <person name="Hickey E.K."/>
            <person name="Haft D.H."/>
            <person name="Salzberg S.L."/>
            <person name="White O."/>
            <person name="Fleischmann R.D."/>
            <person name="Dougherty B.A."/>
            <person name="Mason T.M."/>
            <person name="Ciecko A."/>
            <person name="Parksey D.S."/>
            <person name="Blair E."/>
            <person name="Cittone H."/>
            <person name="Clark E.B."/>
            <person name="Cotton M.D."/>
            <person name="Utterback T.R."/>
            <person name="Khouri H.M."/>
            <person name="Qin H."/>
            <person name="Vamathevan J.J."/>
            <person name="Gill J."/>
            <person name="Scarlato V."/>
            <person name="Masignani V."/>
            <person name="Pizza M."/>
            <person name="Grandi G."/>
            <person name="Sun L."/>
            <person name="Smith H.O."/>
            <person name="Fraser C.M."/>
            <person name="Moxon E.R."/>
            <person name="Rappuoli R."/>
            <person name="Venter J.C."/>
        </authorList>
    </citation>
    <scope>NUCLEOTIDE SEQUENCE [LARGE SCALE GENOMIC DNA]</scope>
    <source>
        <strain>ATCC BAA-335 / MC58</strain>
    </source>
</reference>